<name>XPOT_PYRO7</name>
<reference key="1">
    <citation type="journal article" date="2005" name="Nature">
        <title>The genome sequence of the rice blast fungus Magnaporthe grisea.</title>
        <authorList>
            <person name="Dean R.A."/>
            <person name="Talbot N.J."/>
            <person name="Ebbole D.J."/>
            <person name="Farman M.L."/>
            <person name="Mitchell T.K."/>
            <person name="Orbach M.J."/>
            <person name="Thon M.R."/>
            <person name="Kulkarni R."/>
            <person name="Xu J.-R."/>
            <person name="Pan H."/>
            <person name="Read N.D."/>
            <person name="Lee Y.-H."/>
            <person name="Carbone I."/>
            <person name="Brown D."/>
            <person name="Oh Y.Y."/>
            <person name="Donofrio N."/>
            <person name="Jeong J.S."/>
            <person name="Soanes D.M."/>
            <person name="Djonovic S."/>
            <person name="Kolomiets E."/>
            <person name="Rehmeyer C."/>
            <person name="Li W."/>
            <person name="Harding M."/>
            <person name="Kim S."/>
            <person name="Lebrun M.-H."/>
            <person name="Bohnert H."/>
            <person name="Coughlan S."/>
            <person name="Butler J."/>
            <person name="Calvo S.E."/>
            <person name="Ma L.-J."/>
            <person name="Nicol R."/>
            <person name="Purcell S."/>
            <person name="Nusbaum C."/>
            <person name="Galagan J.E."/>
            <person name="Birren B.W."/>
        </authorList>
    </citation>
    <scope>NUCLEOTIDE SEQUENCE [LARGE SCALE GENOMIC DNA]</scope>
    <source>
        <strain>70-15 / ATCC MYA-4617 / FGSC 8958</strain>
    </source>
</reference>
<keyword id="KW-0963">Cytoplasm</keyword>
<keyword id="KW-0539">Nucleus</keyword>
<keyword id="KW-1185">Reference proteome</keyword>
<keyword id="KW-0694">RNA-binding</keyword>
<keyword id="KW-0813">Transport</keyword>
<keyword id="KW-0819">tRNA processing</keyword>
<keyword id="KW-0820">tRNA-binding</keyword>
<organism>
    <name type="scientific">Pyricularia oryzae (strain 70-15 / ATCC MYA-4617 / FGSC 8958)</name>
    <name type="common">Rice blast fungus</name>
    <name type="synonym">Magnaporthe oryzae</name>
    <dbReference type="NCBI Taxonomy" id="242507"/>
    <lineage>
        <taxon>Eukaryota</taxon>
        <taxon>Fungi</taxon>
        <taxon>Dikarya</taxon>
        <taxon>Ascomycota</taxon>
        <taxon>Pezizomycotina</taxon>
        <taxon>Sordariomycetes</taxon>
        <taxon>Sordariomycetidae</taxon>
        <taxon>Magnaporthales</taxon>
        <taxon>Pyriculariaceae</taxon>
        <taxon>Pyricularia</taxon>
    </lineage>
</organism>
<gene>
    <name type="primary">LOS1</name>
    <name type="ORF">MGG_10127</name>
</gene>
<comment type="function">
    <text evidence="1">tRNA nucleus export receptor which facilitates tRNA translocation across the nuclear pore complex. Involved in pre-tRNA splicing, probably by affecting the interaction of pre-tRNA with splicing endonuclease (By similarity).</text>
</comment>
<comment type="subcellular location">
    <subcellularLocation>
        <location evidence="1">Nucleus</location>
    </subcellularLocation>
    <subcellularLocation>
        <location evidence="1">Cytoplasm</location>
    </subcellularLocation>
    <text evidence="1">Shuttles between the nucleus and the cytoplasm.</text>
</comment>
<comment type="similarity">
    <text evidence="2">Belongs to the exportin family.</text>
</comment>
<feature type="chain" id="PRO_0000343097" description="Exportin-T">
    <location>
        <begin position="1"/>
        <end position="1027"/>
    </location>
</feature>
<protein>
    <recommendedName>
        <fullName>Exportin-T</fullName>
    </recommendedName>
    <alternativeName>
        <fullName>Exportin(tRNA)</fullName>
    </alternativeName>
    <alternativeName>
        <fullName>Karyopherin-beta</fullName>
    </alternativeName>
    <alternativeName>
        <fullName>tRNA exportin</fullName>
    </alternativeName>
</protein>
<sequence>MDAQIENAIQIAWDPQSDPSLKSQAFEFLQQLRADPSAWHICSTLFTKSPRSADVVRLVSLEIVNLAVQVQQLDAASLAFLKDSLLDYVRRTYGPGAQDEPDVPSLQNKLTQTLTYLFARLYKSGWETFLSDFLALTASSEGNPRQRDNVRGVTLYLRILGSVHDEIADNMLARQGNEGKRNAELKDAIRERDMRMVVESWQDLLSQYTGRDDAILEHTLKVMAKWVSWIDISLVITQDMLNLLFPLIGCVNPQGGADMVRDAAIEAFTEIAGKKMKPVDKTELISFLNLRQIISELVASPPLSQFRGTHRYDSDLAESVAKLVNVVVTDVVKVLEDGSVGEESRAKAGQHLQDFLPLLLRLFSDEYDEVCSTVIPSLTDILTFLRKVPELPDSYREMLRPIMDAIVAKMRFDETSHWFEGEEAEEEADFLELRKRLQNLQKSVAAVDENLFIDVMSNLVATTLQNLDERGAQMDWRDIDLALHELLQFGELALPNQGLAAKSQPSSNAAERLNVIMRKLVESSIADFPHPAVLLQYMEVCVRYCVFFETNHSYIPRVLENFVRLVHYDLTRFRVRSWYLFHRFVKQLRAQVGNVAETIIQSIADLLPIKAEVSAEDGSEDDMSSDQTDNSADAIFNSQLYLFEAIGYISSTSATPVDKQALYARSVMEPLFRDMENHLEKAKSGDAQAILQIHHVIMALGTLAHGFGDHAKPGHQRQAPDKLVSAEFARAAEAILIALGQLNSRMDIRAACRSAFSKLLNVLGSAVLPQLPQWIEGLLSQSSSKDEMAMFLRLLDQVVYGFKTEISDVLNLLLTPLLQRVFGGLAEPINGTDDEIQLGELRREYLTFLQIILDNDLGAVLVSETNQGFFESIISSVVTLAKTGGHVNMVASRLAFCTLYRIVGVWGGPDVANISANPSAPTGTPTPAIPGFDQFMIERFHPVCFEVLQDPQFNPSKDAQSKQVLNEIAALEQAIYVKTGNSFISHLQSSLFPALGIDGTEFLRCMTTSTDKKTFGNYLQNLIKNRR</sequence>
<accession>A4RMB1</accession>
<accession>G4MU88</accession>
<dbReference type="EMBL" id="CM001232">
    <property type="protein sequence ID" value="EHA53969.1"/>
    <property type="molecule type" value="Genomic_DNA"/>
</dbReference>
<dbReference type="RefSeq" id="XP_003713776.1">
    <property type="nucleotide sequence ID" value="XM_003713728.1"/>
</dbReference>
<dbReference type="SMR" id="A4RMB1"/>
<dbReference type="FunCoup" id="A4RMB1">
    <property type="interactions" value="1037"/>
</dbReference>
<dbReference type="STRING" id="242507.A4RMB1"/>
<dbReference type="EnsemblFungi" id="MGG_10127T0">
    <property type="protein sequence ID" value="MGG_10127T0"/>
    <property type="gene ID" value="MGG_10127"/>
</dbReference>
<dbReference type="GeneID" id="2681738"/>
<dbReference type="KEGG" id="mgr:MGG_10127"/>
<dbReference type="VEuPathDB" id="FungiDB:MGG_10127"/>
<dbReference type="eggNOG" id="KOG2021">
    <property type="taxonomic scope" value="Eukaryota"/>
</dbReference>
<dbReference type="HOGENOM" id="CLU_004414_0_1_1"/>
<dbReference type="InParanoid" id="A4RMB1"/>
<dbReference type="OMA" id="HEMFLFG"/>
<dbReference type="OrthoDB" id="26399at2759"/>
<dbReference type="Proteomes" id="UP000009058">
    <property type="component" value="Chromosome 2"/>
</dbReference>
<dbReference type="GO" id="GO:0005737">
    <property type="term" value="C:cytoplasm"/>
    <property type="evidence" value="ECO:0007669"/>
    <property type="project" value="UniProtKB-SubCell"/>
</dbReference>
<dbReference type="GO" id="GO:0016363">
    <property type="term" value="C:nuclear matrix"/>
    <property type="evidence" value="ECO:0007669"/>
    <property type="project" value="TreeGrafter"/>
</dbReference>
<dbReference type="GO" id="GO:0005643">
    <property type="term" value="C:nuclear pore"/>
    <property type="evidence" value="ECO:0007669"/>
    <property type="project" value="TreeGrafter"/>
</dbReference>
<dbReference type="GO" id="GO:0031267">
    <property type="term" value="F:small GTPase binding"/>
    <property type="evidence" value="ECO:0007669"/>
    <property type="project" value="InterPro"/>
</dbReference>
<dbReference type="GO" id="GO:0000049">
    <property type="term" value="F:tRNA binding"/>
    <property type="evidence" value="ECO:0007669"/>
    <property type="project" value="UniProtKB-KW"/>
</dbReference>
<dbReference type="GO" id="GO:0008033">
    <property type="term" value="P:tRNA processing"/>
    <property type="evidence" value="ECO:0007669"/>
    <property type="project" value="UniProtKB-KW"/>
</dbReference>
<dbReference type="GO" id="GO:0071528">
    <property type="term" value="P:tRNA re-export from nucleus"/>
    <property type="evidence" value="ECO:0007669"/>
    <property type="project" value="InterPro"/>
</dbReference>
<dbReference type="FunFam" id="1.25.10.10:FF:000355">
    <property type="entry name" value="Exportin-T"/>
    <property type="match status" value="1"/>
</dbReference>
<dbReference type="Gene3D" id="1.25.10.10">
    <property type="entry name" value="Leucine-rich Repeat Variant"/>
    <property type="match status" value="1"/>
</dbReference>
<dbReference type="InterPro" id="IPR011989">
    <property type="entry name" value="ARM-like"/>
</dbReference>
<dbReference type="InterPro" id="IPR016024">
    <property type="entry name" value="ARM-type_fold"/>
</dbReference>
<dbReference type="InterPro" id="IPR013598">
    <property type="entry name" value="Exportin-1/Importin-b-like"/>
</dbReference>
<dbReference type="InterPro" id="IPR045546">
    <property type="entry name" value="Exportin-T_C"/>
</dbReference>
<dbReference type="InterPro" id="IPR040017">
    <property type="entry name" value="XPOT"/>
</dbReference>
<dbReference type="PANTHER" id="PTHR15952:SF11">
    <property type="entry name" value="EXPORTIN-T"/>
    <property type="match status" value="1"/>
</dbReference>
<dbReference type="PANTHER" id="PTHR15952">
    <property type="entry name" value="EXPORTIN-T/LOS1"/>
    <property type="match status" value="1"/>
</dbReference>
<dbReference type="Pfam" id="PF19282">
    <property type="entry name" value="Exportin-T"/>
    <property type="match status" value="1"/>
</dbReference>
<dbReference type="Pfam" id="PF08389">
    <property type="entry name" value="Xpo1"/>
    <property type="match status" value="1"/>
</dbReference>
<dbReference type="SUPFAM" id="SSF48371">
    <property type="entry name" value="ARM repeat"/>
    <property type="match status" value="1"/>
</dbReference>
<proteinExistence type="inferred from homology"/>
<evidence type="ECO:0000250" key="1"/>
<evidence type="ECO:0000305" key="2"/>